<dbReference type="EMBL" id="CM002240">
    <property type="protein sequence ID" value="EAA31613.1"/>
    <property type="molecule type" value="Genomic_DNA"/>
</dbReference>
<dbReference type="RefSeq" id="XP_960849.1">
    <property type="nucleotide sequence ID" value="XM_955756.2"/>
</dbReference>
<dbReference type="PDB" id="6YWS">
    <property type="method" value="EM"/>
    <property type="resolution" value="2.74 A"/>
    <property type="chains" value="a=1-225"/>
</dbReference>
<dbReference type="PDB" id="6YWV">
    <property type="method" value="EM"/>
    <property type="resolution" value="3.03 A"/>
    <property type="chains" value="a=1-225"/>
</dbReference>
<dbReference type="PDB" id="6YWX">
    <property type="method" value="EM"/>
    <property type="resolution" value="3.10 A"/>
    <property type="chains" value="a=1-225"/>
</dbReference>
<dbReference type="PDBsum" id="6YWS"/>
<dbReference type="PDBsum" id="6YWV"/>
<dbReference type="PDBsum" id="6YWX"/>
<dbReference type="EMDB" id="EMD-10973"/>
<dbReference type="EMDB" id="EMD-10977"/>
<dbReference type="EMDB" id="EMD-10978"/>
<dbReference type="SMR" id="Q1K6U7"/>
<dbReference type="FunCoup" id="Q1K6U7">
    <property type="interactions" value="123"/>
</dbReference>
<dbReference type="STRING" id="367110.Q1K6U7"/>
<dbReference type="PaxDb" id="5141-EFNCRP00000003885"/>
<dbReference type="EnsemblFungi" id="EAA31613">
    <property type="protein sequence ID" value="EAA31613"/>
    <property type="gene ID" value="NCU04225"/>
</dbReference>
<dbReference type="GeneID" id="3876996"/>
<dbReference type="KEGG" id="ncr:NCU04225"/>
<dbReference type="VEuPathDB" id="FungiDB:NCU04225"/>
<dbReference type="HOGENOM" id="CLU_089054_0_0_1"/>
<dbReference type="InParanoid" id="Q1K6U7"/>
<dbReference type="OMA" id="CSQFFVG"/>
<dbReference type="OrthoDB" id="6021263at2759"/>
<dbReference type="Proteomes" id="UP000001805">
    <property type="component" value="Chromosome 2, Linkage Group V"/>
</dbReference>
<dbReference type="GO" id="GO:0005762">
    <property type="term" value="C:mitochondrial large ribosomal subunit"/>
    <property type="evidence" value="ECO:0000318"/>
    <property type="project" value="GO_Central"/>
</dbReference>
<dbReference type="GO" id="GO:0003735">
    <property type="term" value="F:structural constituent of ribosome"/>
    <property type="evidence" value="ECO:0000318"/>
    <property type="project" value="GO_Central"/>
</dbReference>
<dbReference type="InterPro" id="IPR024388">
    <property type="entry name" value="Ribosomal_mL58"/>
</dbReference>
<dbReference type="PANTHER" id="PTHR28266">
    <property type="entry name" value="54S RIBOSOMAL PROTEIN L20, MITOCHONDRIAL"/>
    <property type="match status" value="1"/>
</dbReference>
<dbReference type="PANTHER" id="PTHR28266:SF1">
    <property type="entry name" value="LARGE RIBOSOMAL SUBUNIT PROTEIN ML58"/>
    <property type="match status" value="1"/>
</dbReference>
<dbReference type="Pfam" id="PF12824">
    <property type="entry name" value="MRP-L20"/>
    <property type="match status" value="1"/>
</dbReference>
<gene>
    <name type="primary">mrpl20</name>
    <name type="ORF">NCU04225</name>
</gene>
<organism>
    <name type="scientific">Neurospora crassa (strain ATCC 24698 / 74-OR23-1A / CBS 708.71 / DSM 1257 / FGSC 987)</name>
    <dbReference type="NCBI Taxonomy" id="367110"/>
    <lineage>
        <taxon>Eukaryota</taxon>
        <taxon>Fungi</taxon>
        <taxon>Dikarya</taxon>
        <taxon>Ascomycota</taxon>
        <taxon>Pezizomycotina</taxon>
        <taxon>Sordariomycetes</taxon>
        <taxon>Sordariomycetidae</taxon>
        <taxon>Sordariales</taxon>
        <taxon>Sordariaceae</taxon>
        <taxon>Neurospora</taxon>
    </lineage>
</organism>
<feature type="chain" id="PRO_0000458593" description="Large ribosomal subunit protein mL58">
    <location>
        <begin position="1"/>
        <end position="225"/>
    </location>
</feature>
<feature type="region of interest" description="Disordered" evidence="1">
    <location>
        <begin position="106"/>
        <end position="138"/>
    </location>
</feature>
<feature type="compositionally biased region" description="Polar residues" evidence="1">
    <location>
        <begin position="109"/>
        <end position="119"/>
    </location>
</feature>
<reference key="1">
    <citation type="journal article" date="2003" name="Nature">
        <title>The genome sequence of the filamentous fungus Neurospora crassa.</title>
        <authorList>
            <person name="Galagan J.E."/>
            <person name="Calvo S.E."/>
            <person name="Borkovich K.A."/>
            <person name="Selker E.U."/>
            <person name="Read N.D."/>
            <person name="Jaffe D.B."/>
            <person name="FitzHugh W."/>
            <person name="Ma L.-J."/>
            <person name="Smirnov S."/>
            <person name="Purcell S."/>
            <person name="Rehman B."/>
            <person name="Elkins T."/>
            <person name="Engels R."/>
            <person name="Wang S."/>
            <person name="Nielsen C.B."/>
            <person name="Butler J."/>
            <person name="Endrizzi M."/>
            <person name="Qui D."/>
            <person name="Ianakiev P."/>
            <person name="Bell-Pedersen D."/>
            <person name="Nelson M.A."/>
            <person name="Werner-Washburne M."/>
            <person name="Selitrennikoff C.P."/>
            <person name="Kinsey J.A."/>
            <person name="Braun E.L."/>
            <person name="Zelter A."/>
            <person name="Schulte U."/>
            <person name="Kothe G.O."/>
            <person name="Jedd G."/>
            <person name="Mewes H.-W."/>
            <person name="Staben C."/>
            <person name="Marcotte E."/>
            <person name="Greenberg D."/>
            <person name="Roy A."/>
            <person name="Foley K."/>
            <person name="Naylor J."/>
            <person name="Stange-Thomann N."/>
            <person name="Barrett R."/>
            <person name="Gnerre S."/>
            <person name="Kamal M."/>
            <person name="Kamvysselis M."/>
            <person name="Mauceli E.W."/>
            <person name="Bielke C."/>
            <person name="Rudd S."/>
            <person name="Frishman D."/>
            <person name="Krystofova S."/>
            <person name="Rasmussen C."/>
            <person name="Metzenberg R.L."/>
            <person name="Perkins D.D."/>
            <person name="Kroken S."/>
            <person name="Cogoni C."/>
            <person name="Macino G."/>
            <person name="Catcheside D.E.A."/>
            <person name="Li W."/>
            <person name="Pratt R.J."/>
            <person name="Osmani S.A."/>
            <person name="DeSouza C.P.C."/>
            <person name="Glass N.L."/>
            <person name="Orbach M.J."/>
            <person name="Berglund J.A."/>
            <person name="Voelker R."/>
            <person name="Yarden O."/>
            <person name="Plamann M."/>
            <person name="Seiler S."/>
            <person name="Dunlap J.C."/>
            <person name="Radford A."/>
            <person name="Aramayo R."/>
            <person name="Natvig D.O."/>
            <person name="Alex L.A."/>
            <person name="Mannhaupt G."/>
            <person name="Ebbole D.J."/>
            <person name="Freitag M."/>
            <person name="Paulsen I."/>
            <person name="Sachs M.S."/>
            <person name="Lander E.S."/>
            <person name="Nusbaum C."/>
            <person name="Birren B.W."/>
        </authorList>
    </citation>
    <scope>NUCLEOTIDE SEQUENCE [LARGE SCALE GENOMIC DNA]</scope>
    <source>
        <strain>ATCC 24698 / 74-OR23-1A / CBS 708.71 / DSM 1257 / FGSC 987</strain>
    </source>
</reference>
<reference key="2">
    <citation type="journal article" date="2006" name="FEMS Microbiol. Lett.">
        <title>Identification and comparative analysis of the large subunit mitochondrial ribosomal proteins of Neurospora crassa.</title>
        <authorList>
            <person name="Gan X."/>
            <person name="Arita K."/>
            <person name="Isono S."/>
            <person name="Kitakawa M."/>
            <person name="Yoshino K."/>
            <person name="Yonezawa K."/>
            <person name="Kato A."/>
            <person name="Inoue H."/>
            <person name="Isono K."/>
        </authorList>
    </citation>
    <scope>IDENTIFICATION IN THE MITOCHONDRIAL RIBOSOMAL LARGE COMPLEX</scope>
    <scope>IDENTIFICATION BY MASS SPECTROMETRY</scope>
</reference>
<reference evidence="7 8" key="3">
    <citation type="journal article" date="2020" name="Nat. Commun.">
        <title>Analysis of translating mitoribosome reveals functional characteristics of translation in mitochondria of fungi.</title>
        <authorList>
            <person name="Itoh Y."/>
            <person name="Naschberger A."/>
            <person name="Mortezaei N."/>
            <person name="Herrmann J.M."/>
            <person name="Amunts A."/>
        </authorList>
    </citation>
    <scope>STRUCTURE BY ELECTRON MICROSCOPY (2.74 ANGSTROMS)</scope>
</reference>
<keyword id="KW-0002">3D-structure</keyword>
<keyword id="KW-0496">Mitochondrion</keyword>
<keyword id="KW-1185">Reference proteome</keyword>
<keyword id="KW-0687">Ribonucleoprotein</keyword>
<keyword id="KW-0689">Ribosomal protein</keyword>
<name>RM20_NEUCR</name>
<sequence>MEASLSLFRPVATCCRRVALSSSSSSSQKAAAVAGISVRYQSTANRTKRMLNIPPHESFLNVPVEGDRIIFNPPSSEASVYHTPFKFLPRSDPRRRANIYKLFKPPQAPITTPESSSTDAAAADQHGDLPPVLYNPTKSYNVTPEQVEEIRELRAKDPKKYSVTYLSNKYNCTKVFIMMCTQAPREHQEQHKLARARTAENWGPRRAAAKLDARRRKEMLHRGEI</sequence>
<protein>
    <recommendedName>
        <fullName evidence="4">Large ribosomal subunit protein mL58</fullName>
    </recommendedName>
</protein>
<accession>Q1K6U7</accession>
<proteinExistence type="evidence at protein level"/>
<evidence type="ECO:0000256" key="1">
    <source>
        <dbReference type="SAM" id="MobiDB-lite"/>
    </source>
</evidence>
<evidence type="ECO:0000269" key="2">
    <source>
    </source>
</evidence>
<evidence type="ECO:0000269" key="3">
    <source>
    </source>
</evidence>
<evidence type="ECO:0000303" key="4">
    <source>
    </source>
</evidence>
<evidence type="ECO:0000305" key="5"/>
<evidence type="ECO:0000305" key="6">
    <source>
    </source>
</evidence>
<evidence type="ECO:0007744" key="7">
    <source>
        <dbReference type="PDB" id="6YWS"/>
    </source>
</evidence>
<evidence type="ECO:0007744" key="8">
    <source>
        <dbReference type="PDB" id="6YWV"/>
    </source>
</evidence>
<comment type="function">
    <text evidence="6">Component of the mitochondrial ribosome (mitoribosome), a dedicated translation machinery responsible for the synthesis of mitochondrial genome-encoded proteins, including at least some of the essential transmembrane subunits of the mitochondrial respiratory chain. The mitoribosomes are attached to the mitochondrial inner membrane and translation products are cotranslationally integrated into the membrane.</text>
</comment>
<comment type="subunit">
    <text evidence="2 3">Component of the mitochondrial large ribosomal subunit (mt-LSU). Mature N.crassa 74S mitochondrial ribosomes consist of a small (37S) and a large (54S) subunit. The 37S small subunit contains a 16S ribosomal RNA (16S mt-rRNA) and 32 different proteins. The 54S large subunit contains a 23S rRNA (23S mt-rRNA) and 42 different proteins.</text>
</comment>
<comment type="subcellular location">
    <subcellularLocation>
        <location evidence="2 3">Mitochondrion</location>
    </subcellularLocation>
</comment>
<comment type="similarity">
    <text evidence="5">Belongs to the mitochondrion-specific ribosomal protein mL58 family.</text>
</comment>